<keyword id="KW-0072">Autophagy</keyword>
<keyword id="KW-0967">Endosome</keyword>
<keyword id="KW-0446">Lipid-binding</keyword>
<keyword id="KW-0472">Membrane</keyword>
<keyword id="KW-0653">Protein transport</keyword>
<keyword id="KW-1185">Reference proteome</keyword>
<keyword id="KW-0813">Transport</keyword>
<reference key="1">
    <citation type="journal article" date="2005" name="Nature">
        <title>Sequencing of Aspergillus nidulans and comparative analysis with A. fumigatus and A. oryzae.</title>
        <authorList>
            <person name="Galagan J.E."/>
            <person name="Calvo S.E."/>
            <person name="Cuomo C."/>
            <person name="Ma L.-J."/>
            <person name="Wortman J.R."/>
            <person name="Batzoglou S."/>
            <person name="Lee S.-I."/>
            <person name="Bastuerkmen M."/>
            <person name="Spevak C.C."/>
            <person name="Clutterbuck J."/>
            <person name="Kapitonov V."/>
            <person name="Jurka J."/>
            <person name="Scazzocchio C."/>
            <person name="Farman M.L."/>
            <person name="Butler J."/>
            <person name="Purcell S."/>
            <person name="Harris S."/>
            <person name="Braus G.H."/>
            <person name="Draht O."/>
            <person name="Busch S."/>
            <person name="D'Enfert C."/>
            <person name="Bouchier C."/>
            <person name="Goldman G.H."/>
            <person name="Bell-Pedersen D."/>
            <person name="Griffiths-Jones S."/>
            <person name="Doonan J.H."/>
            <person name="Yu J."/>
            <person name="Vienken K."/>
            <person name="Pain A."/>
            <person name="Freitag M."/>
            <person name="Selker E.U."/>
            <person name="Archer D.B."/>
            <person name="Penalva M.A."/>
            <person name="Oakley B.R."/>
            <person name="Momany M."/>
            <person name="Tanaka T."/>
            <person name="Kumagai T."/>
            <person name="Asai K."/>
            <person name="Machida M."/>
            <person name="Nierman W.C."/>
            <person name="Denning D.W."/>
            <person name="Caddick M.X."/>
            <person name="Hynes M."/>
            <person name="Paoletti M."/>
            <person name="Fischer R."/>
            <person name="Miller B.L."/>
            <person name="Dyer P.S."/>
            <person name="Sachs M.S."/>
            <person name="Osmani S.A."/>
            <person name="Birren B.W."/>
        </authorList>
    </citation>
    <scope>NUCLEOTIDE SEQUENCE [LARGE SCALE GENOMIC DNA]</scope>
    <source>
        <strain>FGSC A4 / ATCC 38163 / CBS 112.46 / NRRL 194 / M139</strain>
    </source>
</reference>
<reference key="2">
    <citation type="journal article" date="2009" name="Fungal Genet. Biol.">
        <title>The 2008 update of the Aspergillus nidulans genome annotation: a community effort.</title>
        <authorList>
            <person name="Wortman J.R."/>
            <person name="Gilsenan J.M."/>
            <person name="Joardar V."/>
            <person name="Deegan J."/>
            <person name="Clutterbuck J."/>
            <person name="Andersen M.R."/>
            <person name="Archer D."/>
            <person name="Bencina M."/>
            <person name="Braus G."/>
            <person name="Coutinho P."/>
            <person name="von Dohren H."/>
            <person name="Doonan J."/>
            <person name="Driessen A.J."/>
            <person name="Durek P."/>
            <person name="Espeso E."/>
            <person name="Fekete E."/>
            <person name="Flipphi M."/>
            <person name="Estrada C.G."/>
            <person name="Geysens S."/>
            <person name="Goldman G."/>
            <person name="de Groot P.W."/>
            <person name="Hansen K."/>
            <person name="Harris S.D."/>
            <person name="Heinekamp T."/>
            <person name="Helmstaedt K."/>
            <person name="Henrissat B."/>
            <person name="Hofmann G."/>
            <person name="Homan T."/>
            <person name="Horio T."/>
            <person name="Horiuchi H."/>
            <person name="James S."/>
            <person name="Jones M."/>
            <person name="Karaffa L."/>
            <person name="Karanyi Z."/>
            <person name="Kato M."/>
            <person name="Keller N."/>
            <person name="Kelly D.E."/>
            <person name="Kiel J.A."/>
            <person name="Kim J.M."/>
            <person name="van der Klei I.J."/>
            <person name="Klis F.M."/>
            <person name="Kovalchuk A."/>
            <person name="Krasevec N."/>
            <person name="Kubicek C.P."/>
            <person name="Liu B."/>
            <person name="Maccabe A."/>
            <person name="Meyer V."/>
            <person name="Mirabito P."/>
            <person name="Miskei M."/>
            <person name="Mos M."/>
            <person name="Mullins J."/>
            <person name="Nelson D.R."/>
            <person name="Nielsen J."/>
            <person name="Oakley B.R."/>
            <person name="Osmani S.A."/>
            <person name="Pakula T."/>
            <person name="Paszewski A."/>
            <person name="Paulsen I."/>
            <person name="Pilsyk S."/>
            <person name="Pocsi I."/>
            <person name="Punt P.J."/>
            <person name="Ram A.F."/>
            <person name="Ren Q."/>
            <person name="Robellet X."/>
            <person name="Robson G."/>
            <person name="Seiboth B."/>
            <person name="van Solingen P."/>
            <person name="Specht T."/>
            <person name="Sun J."/>
            <person name="Taheri-Talesh N."/>
            <person name="Takeshita N."/>
            <person name="Ussery D."/>
            <person name="vanKuyk P.A."/>
            <person name="Visser H."/>
            <person name="van de Vondervoort P.J."/>
            <person name="de Vries R.P."/>
            <person name="Walton J."/>
            <person name="Xiang X."/>
            <person name="Xiong Y."/>
            <person name="Zeng A.P."/>
            <person name="Brandt B.W."/>
            <person name="Cornell M.J."/>
            <person name="van den Hondel C.A."/>
            <person name="Visser J."/>
            <person name="Oliver S.G."/>
            <person name="Turner G."/>
        </authorList>
    </citation>
    <scope>GENOME REANNOTATION</scope>
    <source>
        <strain>FGSC A4 / ATCC 38163 / CBS 112.46 / NRRL 194 / M139</strain>
    </source>
</reference>
<proteinExistence type="inferred from homology"/>
<accession>Q5AZC9</accession>
<accession>C8V0Y8</accession>
<evidence type="ECO:0000250" key="1"/>
<evidence type="ECO:0000255" key="2">
    <source>
        <dbReference type="PROSITE-ProRule" id="PRU00147"/>
    </source>
</evidence>
<evidence type="ECO:0000256" key="3">
    <source>
        <dbReference type="SAM" id="MobiDB-lite"/>
    </source>
</evidence>
<evidence type="ECO:0000305" key="4"/>
<organism>
    <name type="scientific">Emericella nidulans (strain FGSC A4 / ATCC 38163 / CBS 112.46 / NRRL 194 / M139)</name>
    <name type="common">Aspergillus nidulans</name>
    <dbReference type="NCBI Taxonomy" id="227321"/>
    <lineage>
        <taxon>Eukaryota</taxon>
        <taxon>Fungi</taxon>
        <taxon>Dikarya</taxon>
        <taxon>Ascomycota</taxon>
        <taxon>Pezizomycotina</taxon>
        <taxon>Eurotiomycetes</taxon>
        <taxon>Eurotiomycetidae</taxon>
        <taxon>Eurotiales</taxon>
        <taxon>Aspergillaceae</taxon>
        <taxon>Aspergillus</taxon>
        <taxon>Aspergillus subgen. Nidulantes</taxon>
    </lineage>
</organism>
<feature type="chain" id="PRO_0000213829" description="Sorting nexin-41">
    <location>
        <begin position="1"/>
        <end position="615"/>
    </location>
</feature>
<feature type="domain" description="PX" evidence="2">
    <location>
        <begin position="93"/>
        <end position="210"/>
    </location>
</feature>
<feature type="region of interest" description="Disordered" evidence="3">
    <location>
        <begin position="1"/>
        <end position="71"/>
    </location>
</feature>
<feature type="region of interest" description="Disordered" evidence="3">
    <location>
        <begin position="218"/>
        <end position="277"/>
    </location>
</feature>
<feature type="region of interest" description="Disordered" evidence="3">
    <location>
        <begin position="432"/>
        <end position="504"/>
    </location>
</feature>
<feature type="compositionally biased region" description="Low complexity" evidence="3">
    <location>
        <begin position="42"/>
        <end position="53"/>
    </location>
</feature>
<feature type="compositionally biased region" description="Polar residues" evidence="3">
    <location>
        <begin position="252"/>
        <end position="263"/>
    </location>
</feature>
<feature type="compositionally biased region" description="Polar residues" evidence="3">
    <location>
        <begin position="434"/>
        <end position="446"/>
    </location>
</feature>
<feature type="compositionally biased region" description="Low complexity" evidence="3">
    <location>
        <begin position="447"/>
        <end position="456"/>
    </location>
</feature>
<feature type="binding site" evidence="1">
    <location>
        <position position="127"/>
    </location>
    <ligand>
        <name>a 1,2-diacyl-sn-glycero-3-phospho-(1D-myo-inositol-3-phosphate)</name>
        <dbReference type="ChEBI" id="CHEBI:58088"/>
    </ligand>
</feature>
<feature type="binding site" evidence="1">
    <location>
        <position position="129"/>
    </location>
    <ligand>
        <name>a 1,2-diacyl-sn-glycero-3-phospho-(1D-myo-inositol-3-phosphate)</name>
        <dbReference type="ChEBI" id="CHEBI:58088"/>
    </ligand>
</feature>
<feature type="binding site" evidence="1">
    <location>
        <position position="153"/>
    </location>
    <ligand>
        <name>a 1,2-diacyl-sn-glycero-3-phospho-(1D-myo-inositol-3-phosphate)</name>
        <dbReference type="ChEBI" id="CHEBI:58088"/>
    </ligand>
</feature>
<feature type="binding site" evidence="1">
    <location>
        <position position="176"/>
    </location>
    <ligand>
        <name>a 1,2-diacyl-sn-glycero-3-phospho-(1D-myo-inositol-3-phosphate)</name>
        <dbReference type="ChEBI" id="CHEBI:58088"/>
    </ligand>
</feature>
<gene>
    <name type="primary">snx41</name>
    <name type="ORF">AN6351</name>
</gene>
<name>SNX41_EMENI</name>
<sequence>MWNDEDNNPYGAFDSEARLSESLHSTTIESPFNHDYPPPPSSHSSNPDISDFSQHPEASDDDEGDYVGQANRAGYSHKSVYDSRIEQLLYENPDMPILITDAGKNHEGGGSFIVYTIRTGDLEVRRRYSEFASLRQTLVSLHPTLIVPPIPEKHSMADYAAKPTKAKEDAGIIDLRKRMLAVFLNRCRRMKEIREDGVWWRFLDPNVSWSEVLHSHPASSVPKNNLKAPPLDPANPTPAHAWLPVPSASAKLKSTSGTSSSPNAEAPGPEILGRFPPESRKLSEKDLDPYFINFEASTRELELLLQGNMEKVNRRTLAHLSGLSADLMELGARYNGFSLSEQSPTVATAIERVGQAADTSYIETEELSLALGANFAEPMRESAQFASVVRSVLRYRVLKRVQEDMTRDELSKKKSLLESLERSEQEAKRIEQYLNRTSPQAPTKQRSLSTSSATSSQGGTDESRPSGEETASIDSDFPPTHAEHVSQRYPESGQTSPPAHRKTSSGTFVANKIFGRISHAVHGFVDVDPERTRRDHIGKTKESLVQLEQALGVSEKDVKDASAGVLQDLKRFQKDKEADLRRYMVAYARCHLNWARKNLETWTEAKDEVDKIEAR</sequence>
<dbReference type="EMBL" id="AACD01000107">
    <property type="protein sequence ID" value="EAA58735.1"/>
    <property type="molecule type" value="Genomic_DNA"/>
</dbReference>
<dbReference type="EMBL" id="BN001301">
    <property type="protein sequence ID" value="CBF69644.1"/>
    <property type="molecule type" value="Genomic_DNA"/>
</dbReference>
<dbReference type="RefSeq" id="XP_663955.1">
    <property type="nucleotide sequence ID" value="XM_658863.1"/>
</dbReference>
<dbReference type="FunCoup" id="Q5AZC9">
    <property type="interactions" value="107"/>
</dbReference>
<dbReference type="STRING" id="227321.Q5AZC9"/>
<dbReference type="EnsemblFungi" id="CBF69644">
    <property type="protein sequence ID" value="CBF69644"/>
    <property type="gene ID" value="ANIA_06351"/>
</dbReference>
<dbReference type="KEGG" id="ani:ANIA_06351"/>
<dbReference type="VEuPathDB" id="FungiDB:AN6351"/>
<dbReference type="eggNOG" id="KOG2273">
    <property type="taxonomic scope" value="Eukaryota"/>
</dbReference>
<dbReference type="HOGENOM" id="CLU_014456_0_0_1"/>
<dbReference type="InParanoid" id="Q5AZC9"/>
<dbReference type="OMA" id="CRRMKEV"/>
<dbReference type="OrthoDB" id="289314at2759"/>
<dbReference type="Proteomes" id="UP000000560">
    <property type="component" value="Chromosome I"/>
</dbReference>
<dbReference type="GO" id="GO:0005829">
    <property type="term" value="C:cytosol"/>
    <property type="evidence" value="ECO:0007669"/>
    <property type="project" value="GOC"/>
</dbReference>
<dbReference type="GO" id="GO:0010008">
    <property type="term" value="C:endosome membrane"/>
    <property type="evidence" value="ECO:0007669"/>
    <property type="project" value="UniProtKB-SubCell"/>
</dbReference>
<dbReference type="GO" id="GO:0000407">
    <property type="term" value="C:phagophore assembly site"/>
    <property type="evidence" value="ECO:0000318"/>
    <property type="project" value="GO_Central"/>
</dbReference>
<dbReference type="GO" id="GO:0032266">
    <property type="term" value="F:phosphatidylinositol-3-phosphate binding"/>
    <property type="evidence" value="ECO:0000318"/>
    <property type="project" value="GO_Central"/>
</dbReference>
<dbReference type="GO" id="GO:0000422">
    <property type="term" value="P:autophagy of mitochondrion"/>
    <property type="evidence" value="ECO:0000318"/>
    <property type="project" value="GO_Central"/>
</dbReference>
<dbReference type="GO" id="GO:0015031">
    <property type="term" value="P:protein transport"/>
    <property type="evidence" value="ECO:0007669"/>
    <property type="project" value="UniProtKB-KW"/>
</dbReference>
<dbReference type="GO" id="GO:0061709">
    <property type="term" value="P:reticulophagy"/>
    <property type="evidence" value="ECO:0000318"/>
    <property type="project" value="GO_Central"/>
</dbReference>
<dbReference type="GO" id="GO:0042147">
    <property type="term" value="P:retrograde transport, endosome to Golgi"/>
    <property type="evidence" value="ECO:0007669"/>
    <property type="project" value="InterPro"/>
</dbReference>
<dbReference type="CDD" id="cd06867">
    <property type="entry name" value="PX_SNX41_42"/>
    <property type="match status" value="1"/>
</dbReference>
<dbReference type="Gene3D" id="1.20.1270.60">
    <property type="entry name" value="Arfaptin homology (AH) domain/BAR domain"/>
    <property type="match status" value="2"/>
</dbReference>
<dbReference type="Gene3D" id="3.30.1520.10">
    <property type="entry name" value="Phox-like domain"/>
    <property type="match status" value="1"/>
</dbReference>
<dbReference type="InterPro" id="IPR027267">
    <property type="entry name" value="AH/BAR_dom_sf"/>
</dbReference>
<dbReference type="InterPro" id="IPR001683">
    <property type="entry name" value="PX_dom"/>
</dbReference>
<dbReference type="InterPro" id="IPR036871">
    <property type="entry name" value="PX_dom_sf"/>
</dbReference>
<dbReference type="InterPro" id="IPR044106">
    <property type="entry name" value="PX_Snx41/Atg20"/>
</dbReference>
<dbReference type="InterPro" id="IPR051079">
    <property type="entry name" value="Sorting_Nexin_Autophagy"/>
</dbReference>
<dbReference type="PANTHER" id="PTHR46979">
    <property type="entry name" value="SORTING NEXIN-41"/>
    <property type="match status" value="1"/>
</dbReference>
<dbReference type="PANTHER" id="PTHR46979:SF2">
    <property type="entry name" value="SORTING NEXIN-41"/>
    <property type="match status" value="1"/>
</dbReference>
<dbReference type="Pfam" id="PF00787">
    <property type="entry name" value="PX"/>
    <property type="match status" value="1"/>
</dbReference>
<dbReference type="SMART" id="SM00312">
    <property type="entry name" value="PX"/>
    <property type="match status" value="1"/>
</dbReference>
<dbReference type="SUPFAM" id="SSF64268">
    <property type="entry name" value="PX domain"/>
    <property type="match status" value="1"/>
</dbReference>
<dbReference type="PROSITE" id="PS50195">
    <property type="entry name" value="PX"/>
    <property type="match status" value="1"/>
</dbReference>
<protein>
    <recommendedName>
        <fullName>Sorting nexin-41</fullName>
    </recommendedName>
</protein>
<comment type="function">
    <text evidence="1">May be required for cytoplasm to vacuole transport (Cvt) and pexophagy.</text>
</comment>
<comment type="subcellular location">
    <subcellularLocation>
        <location evidence="1">Endosome membrane</location>
        <topology evidence="1">Peripheral membrane protein</topology>
    </subcellularLocation>
    <subcellularLocation>
        <location evidence="1">Endomembrane system</location>
        <topology evidence="1">Peripheral membrane protein</topology>
    </subcellularLocation>
    <text evidence="1">Endosome and other perivacuolar punctate structures.</text>
</comment>
<comment type="domain">
    <text evidence="1">The PX domain binds phosphatidylinositol 3-phosphate which is necessary for peripheral membrane localization to the perivacuolar punctate structures.</text>
</comment>
<comment type="similarity">
    <text evidence="4">Belongs to the sorting nexin family.</text>
</comment>